<protein>
    <recommendedName>
        <fullName evidence="1">Orotidine 5'-phosphate decarboxylase</fullName>
        <ecNumber evidence="1">4.1.1.23</ecNumber>
    </recommendedName>
    <alternativeName>
        <fullName evidence="1">OMP decarboxylase</fullName>
        <shortName evidence="1">OMPDCase</shortName>
        <shortName evidence="1">OMPdecase</shortName>
    </alternativeName>
</protein>
<comment type="function">
    <text evidence="1">Catalyzes the decarboxylation of orotidine 5'-monophosphate (OMP) to uridine 5'-monophosphate (UMP).</text>
</comment>
<comment type="catalytic activity">
    <reaction evidence="1">
        <text>orotidine 5'-phosphate + H(+) = UMP + CO2</text>
        <dbReference type="Rhea" id="RHEA:11596"/>
        <dbReference type="ChEBI" id="CHEBI:15378"/>
        <dbReference type="ChEBI" id="CHEBI:16526"/>
        <dbReference type="ChEBI" id="CHEBI:57538"/>
        <dbReference type="ChEBI" id="CHEBI:57865"/>
        <dbReference type="EC" id="4.1.1.23"/>
    </reaction>
</comment>
<comment type="pathway">
    <text evidence="1">Pyrimidine metabolism; UMP biosynthesis via de novo pathway; UMP from orotate: step 2/2.</text>
</comment>
<comment type="subunit">
    <text evidence="1">Homodimer.</text>
</comment>
<comment type="similarity">
    <text evidence="1">Belongs to the OMP decarboxylase family. Type 1 subfamily.</text>
</comment>
<evidence type="ECO:0000255" key="1">
    <source>
        <dbReference type="HAMAP-Rule" id="MF_01200"/>
    </source>
</evidence>
<dbReference type="EC" id="4.1.1.23" evidence="1"/>
<dbReference type="EMBL" id="CP001161">
    <property type="protein sequence ID" value="ACL30634.1"/>
    <property type="molecule type" value="Genomic_DNA"/>
</dbReference>
<dbReference type="RefSeq" id="WP_012619382.1">
    <property type="nucleotide sequence ID" value="NC_011833.1"/>
</dbReference>
<dbReference type="SMR" id="B8D963"/>
<dbReference type="KEGG" id="bap:BUAP5A_265"/>
<dbReference type="HOGENOM" id="CLU_067069_0_0_6"/>
<dbReference type="OrthoDB" id="9806203at2"/>
<dbReference type="UniPathway" id="UPA00070">
    <property type="reaction ID" value="UER00120"/>
</dbReference>
<dbReference type="Proteomes" id="UP000006904">
    <property type="component" value="Chromosome"/>
</dbReference>
<dbReference type="GO" id="GO:0005829">
    <property type="term" value="C:cytosol"/>
    <property type="evidence" value="ECO:0007669"/>
    <property type="project" value="TreeGrafter"/>
</dbReference>
<dbReference type="GO" id="GO:0004590">
    <property type="term" value="F:orotidine-5'-phosphate decarboxylase activity"/>
    <property type="evidence" value="ECO:0007669"/>
    <property type="project" value="UniProtKB-UniRule"/>
</dbReference>
<dbReference type="GO" id="GO:0006207">
    <property type="term" value="P:'de novo' pyrimidine nucleobase biosynthetic process"/>
    <property type="evidence" value="ECO:0007669"/>
    <property type="project" value="InterPro"/>
</dbReference>
<dbReference type="GO" id="GO:0044205">
    <property type="term" value="P:'de novo' UMP biosynthetic process"/>
    <property type="evidence" value="ECO:0007669"/>
    <property type="project" value="UniProtKB-UniRule"/>
</dbReference>
<dbReference type="CDD" id="cd04725">
    <property type="entry name" value="OMP_decarboxylase_like"/>
    <property type="match status" value="1"/>
</dbReference>
<dbReference type="FunFam" id="3.20.20.70:FF:000015">
    <property type="entry name" value="Orotidine 5'-phosphate decarboxylase"/>
    <property type="match status" value="1"/>
</dbReference>
<dbReference type="Gene3D" id="3.20.20.70">
    <property type="entry name" value="Aldolase class I"/>
    <property type="match status" value="1"/>
</dbReference>
<dbReference type="HAMAP" id="MF_01200_B">
    <property type="entry name" value="OMPdecase_type1_B"/>
    <property type="match status" value="1"/>
</dbReference>
<dbReference type="InterPro" id="IPR013785">
    <property type="entry name" value="Aldolase_TIM"/>
</dbReference>
<dbReference type="InterPro" id="IPR014732">
    <property type="entry name" value="OMPdecase"/>
</dbReference>
<dbReference type="InterPro" id="IPR018089">
    <property type="entry name" value="OMPdecase_AS"/>
</dbReference>
<dbReference type="InterPro" id="IPR047596">
    <property type="entry name" value="OMPdecase_bac"/>
</dbReference>
<dbReference type="InterPro" id="IPR001754">
    <property type="entry name" value="OMPdeCOase_dom"/>
</dbReference>
<dbReference type="InterPro" id="IPR011060">
    <property type="entry name" value="RibuloseP-bd_barrel"/>
</dbReference>
<dbReference type="NCBIfam" id="NF001273">
    <property type="entry name" value="PRK00230.1"/>
    <property type="match status" value="1"/>
</dbReference>
<dbReference type="NCBIfam" id="TIGR01740">
    <property type="entry name" value="pyrF"/>
    <property type="match status" value="1"/>
</dbReference>
<dbReference type="PANTHER" id="PTHR32119">
    <property type="entry name" value="OROTIDINE 5'-PHOSPHATE DECARBOXYLASE"/>
    <property type="match status" value="1"/>
</dbReference>
<dbReference type="PANTHER" id="PTHR32119:SF2">
    <property type="entry name" value="OROTIDINE 5'-PHOSPHATE DECARBOXYLASE"/>
    <property type="match status" value="1"/>
</dbReference>
<dbReference type="Pfam" id="PF00215">
    <property type="entry name" value="OMPdecase"/>
    <property type="match status" value="1"/>
</dbReference>
<dbReference type="SMART" id="SM00934">
    <property type="entry name" value="OMPdecase"/>
    <property type="match status" value="1"/>
</dbReference>
<dbReference type="SUPFAM" id="SSF51366">
    <property type="entry name" value="Ribulose-phoshate binding barrel"/>
    <property type="match status" value="1"/>
</dbReference>
<dbReference type="PROSITE" id="PS00156">
    <property type="entry name" value="OMPDECASE"/>
    <property type="match status" value="1"/>
</dbReference>
<name>PYRF_BUCA5</name>
<accession>B8D963</accession>
<sequence>MLNPNIFHMPKIIIALDFCNKKSAMKLVNLLNPSIFYLKIGKEMFTILGCKFVKELHQLGFNIFLDLKFHDIPNTVFNATKAAADLGIWMLSVHASGGKEMLISAKKALKSFKKAPLLIAVTALTSFKEEALKEIGINISLTEYILKLSKLSNDCGLDGIVCPGKEAKKIKFLFGNKYKIITPGIRIAKDLLYDQNNIITPKKAKEYKIDYIVIGRSITMSKNPIKKLDLIIKSMQ</sequence>
<reference key="1">
    <citation type="journal article" date="2009" name="Science">
        <title>The dynamics and time scale of ongoing genomic erosion in symbiotic bacteria.</title>
        <authorList>
            <person name="Moran N.A."/>
            <person name="McLaughlin H.J."/>
            <person name="Sorek R."/>
        </authorList>
    </citation>
    <scope>NUCLEOTIDE SEQUENCE [LARGE SCALE GENOMIC DNA]</scope>
    <source>
        <strain>5A</strain>
    </source>
</reference>
<feature type="chain" id="PRO_1000164562" description="Orotidine 5'-phosphate decarboxylase">
    <location>
        <begin position="1"/>
        <end position="236"/>
    </location>
</feature>
<feature type="active site" description="Proton donor" evidence="1">
    <location>
        <position position="68"/>
    </location>
</feature>
<feature type="binding site" evidence="1">
    <location>
        <position position="17"/>
    </location>
    <ligand>
        <name>substrate</name>
    </ligand>
</feature>
<feature type="binding site" evidence="1">
    <location>
        <position position="39"/>
    </location>
    <ligand>
        <name>substrate</name>
    </ligand>
</feature>
<feature type="binding site" evidence="1">
    <location>
        <begin position="66"/>
        <end position="75"/>
    </location>
    <ligand>
        <name>substrate</name>
    </ligand>
</feature>
<feature type="binding site" evidence="1">
    <location>
        <position position="125"/>
    </location>
    <ligand>
        <name>substrate</name>
    </ligand>
</feature>
<feature type="binding site" evidence="1">
    <location>
        <position position="186"/>
    </location>
    <ligand>
        <name>substrate</name>
    </ligand>
</feature>
<feature type="binding site" evidence="1">
    <location>
        <position position="195"/>
    </location>
    <ligand>
        <name>substrate</name>
    </ligand>
</feature>
<feature type="binding site" evidence="1">
    <location>
        <position position="215"/>
    </location>
    <ligand>
        <name>substrate</name>
    </ligand>
</feature>
<feature type="binding site" evidence="1">
    <location>
        <position position="216"/>
    </location>
    <ligand>
        <name>substrate</name>
    </ligand>
</feature>
<organism>
    <name type="scientific">Buchnera aphidicola subsp. Acyrthosiphon pisum (strain 5A)</name>
    <dbReference type="NCBI Taxonomy" id="563178"/>
    <lineage>
        <taxon>Bacteria</taxon>
        <taxon>Pseudomonadati</taxon>
        <taxon>Pseudomonadota</taxon>
        <taxon>Gammaproteobacteria</taxon>
        <taxon>Enterobacterales</taxon>
        <taxon>Erwiniaceae</taxon>
        <taxon>Buchnera</taxon>
    </lineage>
</organism>
<gene>
    <name evidence="1" type="primary">pyrF</name>
    <name type="ordered locus">BUAP5A_265</name>
</gene>
<keyword id="KW-0210">Decarboxylase</keyword>
<keyword id="KW-0456">Lyase</keyword>
<keyword id="KW-0665">Pyrimidine biosynthesis</keyword>
<proteinExistence type="inferred from homology"/>